<protein>
    <recommendedName>
        <fullName evidence="1">tRNA uridine 5-carboxymethylaminomethyl modification enzyme MnmG</fullName>
    </recommendedName>
    <alternativeName>
        <fullName evidence="1">Glucose-inhibited division protein A</fullName>
    </alternativeName>
</protein>
<dbReference type="EMBL" id="CT573326">
    <property type="protein sequence ID" value="CAK18160.1"/>
    <property type="molecule type" value="Genomic_DNA"/>
</dbReference>
<dbReference type="RefSeq" id="WP_011536511.1">
    <property type="nucleotide sequence ID" value="NC_008027.1"/>
</dbReference>
<dbReference type="SMR" id="Q1I2H6"/>
<dbReference type="STRING" id="384676.PSEEN5554"/>
<dbReference type="GeneID" id="32808452"/>
<dbReference type="KEGG" id="pen:PSEEN5554"/>
<dbReference type="eggNOG" id="COG0445">
    <property type="taxonomic scope" value="Bacteria"/>
</dbReference>
<dbReference type="HOGENOM" id="CLU_007831_2_2_6"/>
<dbReference type="OrthoDB" id="9815560at2"/>
<dbReference type="Proteomes" id="UP000000658">
    <property type="component" value="Chromosome"/>
</dbReference>
<dbReference type="GO" id="GO:0005829">
    <property type="term" value="C:cytosol"/>
    <property type="evidence" value="ECO:0007669"/>
    <property type="project" value="TreeGrafter"/>
</dbReference>
<dbReference type="GO" id="GO:0050660">
    <property type="term" value="F:flavin adenine dinucleotide binding"/>
    <property type="evidence" value="ECO:0007669"/>
    <property type="project" value="UniProtKB-UniRule"/>
</dbReference>
<dbReference type="GO" id="GO:0030488">
    <property type="term" value="P:tRNA methylation"/>
    <property type="evidence" value="ECO:0007669"/>
    <property type="project" value="TreeGrafter"/>
</dbReference>
<dbReference type="GO" id="GO:0002098">
    <property type="term" value="P:tRNA wobble uridine modification"/>
    <property type="evidence" value="ECO:0007669"/>
    <property type="project" value="InterPro"/>
</dbReference>
<dbReference type="FunFam" id="1.10.10.1800:FF:000001">
    <property type="entry name" value="tRNA uridine 5-carboxymethylaminomethyl modification enzyme MnmG"/>
    <property type="match status" value="1"/>
</dbReference>
<dbReference type="FunFam" id="1.10.150.570:FF:000001">
    <property type="entry name" value="tRNA uridine 5-carboxymethylaminomethyl modification enzyme MnmG"/>
    <property type="match status" value="1"/>
</dbReference>
<dbReference type="FunFam" id="3.50.50.60:FF:000002">
    <property type="entry name" value="tRNA uridine 5-carboxymethylaminomethyl modification enzyme MnmG"/>
    <property type="match status" value="1"/>
</dbReference>
<dbReference type="FunFam" id="3.50.50.60:FF:000010">
    <property type="entry name" value="tRNA uridine 5-carboxymethylaminomethyl modification enzyme MnmG"/>
    <property type="match status" value="1"/>
</dbReference>
<dbReference type="Gene3D" id="3.50.50.60">
    <property type="entry name" value="FAD/NAD(P)-binding domain"/>
    <property type="match status" value="2"/>
</dbReference>
<dbReference type="Gene3D" id="1.10.150.570">
    <property type="entry name" value="GidA associated domain, C-terminal subdomain"/>
    <property type="match status" value="1"/>
</dbReference>
<dbReference type="Gene3D" id="1.10.10.1800">
    <property type="entry name" value="tRNA uridine 5-carboxymethylaminomethyl modification enzyme MnmG/GidA"/>
    <property type="match status" value="1"/>
</dbReference>
<dbReference type="HAMAP" id="MF_00129">
    <property type="entry name" value="MnmG_GidA"/>
    <property type="match status" value="1"/>
</dbReference>
<dbReference type="InterPro" id="IPR036188">
    <property type="entry name" value="FAD/NAD-bd_sf"/>
</dbReference>
<dbReference type="InterPro" id="IPR049312">
    <property type="entry name" value="GIDA_C_N"/>
</dbReference>
<dbReference type="InterPro" id="IPR004416">
    <property type="entry name" value="MnmG"/>
</dbReference>
<dbReference type="InterPro" id="IPR002218">
    <property type="entry name" value="MnmG-rel"/>
</dbReference>
<dbReference type="InterPro" id="IPR020595">
    <property type="entry name" value="MnmG-rel_CS"/>
</dbReference>
<dbReference type="InterPro" id="IPR026904">
    <property type="entry name" value="MnmG_C"/>
</dbReference>
<dbReference type="InterPro" id="IPR047001">
    <property type="entry name" value="MnmG_C_subdom"/>
</dbReference>
<dbReference type="InterPro" id="IPR044920">
    <property type="entry name" value="MnmG_C_subdom_sf"/>
</dbReference>
<dbReference type="InterPro" id="IPR040131">
    <property type="entry name" value="MnmG_N"/>
</dbReference>
<dbReference type="NCBIfam" id="TIGR00136">
    <property type="entry name" value="mnmG_gidA"/>
    <property type="match status" value="1"/>
</dbReference>
<dbReference type="PANTHER" id="PTHR11806">
    <property type="entry name" value="GLUCOSE INHIBITED DIVISION PROTEIN A"/>
    <property type="match status" value="1"/>
</dbReference>
<dbReference type="PANTHER" id="PTHR11806:SF0">
    <property type="entry name" value="PROTEIN MTO1 HOMOLOG, MITOCHONDRIAL"/>
    <property type="match status" value="1"/>
</dbReference>
<dbReference type="Pfam" id="PF01134">
    <property type="entry name" value="GIDA"/>
    <property type="match status" value="1"/>
</dbReference>
<dbReference type="Pfam" id="PF21680">
    <property type="entry name" value="GIDA_C_1st"/>
    <property type="match status" value="1"/>
</dbReference>
<dbReference type="Pfam" id="PF13932">
    <property type="entry name" value="SAM_GIDA_C"/>
    <property type="match status" value="1"/>
</dbReference>
<dbReference type="PRINTS" id="PR00411">
    <property type="entry name" value="PNDRDTASEI"/>
</dbReference>
<dbReference type="SMART" id="SM01228">
    <property type="entry name" value="GIDA_assoc_3"/>
    <property type="match status" value="1"/>
</dbReference>
<dbReference type="SUPFAM" id="SSF51905">
    <property type="entry name" value="FAD/NAD(P)-binding domain"/>
    <property type="match status" value="1"/>
</dbReference>
<dbReference type="PROSITE" id="PS01280">
    <property type="entry name" value="GIDA_1"/>
    <property type="match status" value="1"/>
</dbReference>
<dbReference type="PROSITE" id="PS01281">
    <property type="entry name" value="GIDA_2"/>
    <property type="match status" value="1"/>
</dbReference>
<organism>
    <name type="scientific">Pseudomonas entomophila (strain L48)</name>
    <dbReference type="NCBI Taxonomy" id="384676"/>
    <lineage>
        <taxon>Bacteria</taxon>
        <taxon>Pseudomonadati</taxon>
        <taxon>Pseudomonadota</taxon>
        <taxon>Gammaproteobacteria</taxon>
        <taxon>Pseudomonadales</taxon>
        <taxon>Pseudomonadaceae</taxon>
        <taxon>Pseudomonas</taxon>
    </lineage>
</organism>
<sequence length="630" mass="69298">MDFPSRFEVIVIGGGHAGTEAALASARMGVKTLLLTHNVETLGHMSCNPAIGGIGKSHLVKEIDALGGAMALATDMSGIQFRVLNNRKGPAVRATRAQADRAIYKAVVREILENQPNLWIFQQSCDDLIVEQDQVKGVVTQMGLRFFADSVVLTSGTFLGGLIHIGLQNYSGGRAGDPPANALAQRMRELPLRVGRLKTGTPPRIDGRSVDFSVMTEQPGDTPIPVMSFMGNAAMHPRQVSCWITHTNARTHEIIASNLDRSPMYSGVIEGIGPRYCPSIEDKIHRFADKESHQVFIEPEGLTTHELYPNGISTSLPFDVQLEIVRSIRGMENAHIVRPGYAIEYDYFDPRDLKYSLETKVIGGLFFAGQINGTTGYEEAGAQGLLAGTNAALRAQGRESWCPRRDEAYIGVLVDDLITLGTQEPYRMFTSRAEYRLILREDNADLRLTEKGRELGLIDDARWAAFCAKREGIEREEQRLKSTWVRPGTPQGQAVVDKFGTPLAHEYSLLNLLARPEVDYAGLIEATGGEVIDPQVAEQVEIKTKYAGYIDRQQEEIARLRASEDTRLPVDIDYTTISGLSKEIQGKLEQTRPETLGQASRIPGVTPAAISLLLIHLKKRGAGRELEQSA</sequence>
<keyword id="KW-0963">Cytoplasm</keyword>
<keyword id="KW-0274">FAD</keyword>
<keyword id="KW-0285">Flavoprotein</keyword>
<keyword id="KW-0520">NAD</keyword>
<keyword id="KW-0819">tRNA processing</keyword>
<reference key="1">
    <citation type="journal article" date="2006" name="Nat. Biotechnol.">
        <title>Complete genome sequence of the entomopathogenic and metabolically versatile soil bacterium Pseudomonas entomophila.</title>
        <authorList>
            <person name="Vodovar N."/>
            <person name="Vallenet D."/>
            <person name="Cruveiller S."/>
            <person name="Rouy Z."/>
            <person name="Barbe V."/>
            <person name="Acosta C."/>
            <person name="Cattolico L."/>
            <person name="Jubin C."/>
            <person name="Lajus A."/>
            <person name="Segurens B."/>
            <person name="Vacherie B."/>
            <person name="Wincker P."/>
            <person name="Weissenbach J."/>
            <person name="Lemaitre B."/>
            <person name="Medigue C."/>
            <person name="Boccard F."/>
        </authorList>
    </citation>
    <scope>NUCLEOTIDE SEQUENCE [LARGE SCALE GENOMIC DNA]</scope>
    <source>
        <strain>L48</strain>
    </source>
</reference>
<accession>Q1I2H6</accession>
<proteinExistence type="inferred from homology"/>
<comment type="function">
    <text evidence="1">NAD-binding protein involved in the addition of a carboxymethylaminomethyl (cmnm) group at the wobble position (U34) of certain tRNAs, forming tRNA-cmnm(5)s(2)U34.</text>
</comment>
<comment type="cofactor">
    <cofactor evidence="1">
        <name>FAD</name>
        <dbReference type="ChEBI" id="CHEBI:57692"/>
    </cofactor>
</comment>
<comment type="subunit">
    <text evidence="1">Homodimer. Heterotetramer of two MnmE and two MnmG subunits.</text>
</comment>
<comment type="subcellular location">
    <subcellularLocation>
        <location evidence="1">Cytoplasm</location>
    </subcellularLocation>
</comment>
<comment type="similarity">
    <text evidence="1">Belongs to the MnmG family.</text>
</comment>
<gene>
    <name evidence="1" type="primary">mnmG</name>
    <name evidence="1" type="synonym">gidA</name>
    <name type="ordered locus">PSEEN5554</name>
</gene>
<feature type="chain" id="PRO_1000016645" description="tRNA uridine 5-carboxymethylaminomethyl modification enzyme MnmG">
    <location>
        <begin position="1"/>
        <end position="630"/>
    </location>
</feature>
<feature type="binding site" evidence="1">
    <location>
        <begin position="13"/>
        <end position="18"/>
    </location>
    <ligand>
        <name>FAD</name>
        <dbReference type="ChEBI" id="CHEBI:57692"/>
    </ligand>
</feature>
<feature type="binding site" evidence="1">
    <location>
        <begin position="273"/>
        <end position="287"/>
    </location>
    <ligand>
        <name>NAD(+)</name>
        <dbReference type="ChEBI" id="CHEBI:57540"/>
    </ligand>
</feature>
<name>MNMG_PSEE4</name>
<evidence type="ECO:0000255" key="1">
    <source>
        <dbReference type="HAMAP-Rule" id="MF_00129"/>
    </source>
</evidence>